<evidence type="ECO:0000255" key="1">
    <source>
        <dbReference type="HAMAP-Rule" id="MF_00693"/>
    </source>
</evidence>
<gene>
    <name type="ordered locus">BMEA_A1769</name>
</gene>
<keyword id="KW-0963">Cytoplasm</keyword>
<keyword id="KW-0238">DNA-binding</keyword>
<keyword id="KW-0804">Transcription</keyword>
<keyword id="KW-0805">Transcription regulation</keyword>
<sequence length="248" mass="26949">MAGHSQFKNIMHRKGRQDAVRSKMFSKLAREITVAAKQGLPDPAMNPRLRLAIQNAKAQSMPKDNIERAIKKAAGNDGENYDEVRYEGRGPGGVSVIVEALTDNRNRTASNVRAAFTKSGGSLGETGSVSFMFDRVGEIVYKPEAGDADKVMEAAIEAGAEDVQSGEDGHVILCAFEDIGEVSKALEAALGEAESIKTIWKPQTNTELDEEKARSVLKLLSVLEDDDDVQNVYTNFEVSDEVMEKLSA</sequence>
<accession>C0REX9</accession>
<feature type="chain" id="PRO_1000200083" description="Probable transcriptional regulatory protein BMEA_A1769">
    <location>
        <begin position="1"/>
        <end position="248"/>
    </location>
</feature>
<organism>
    <name type="scientific">Brucella melitensis biotype 2 (strain ATCC 23457)</name>
    <dbReference type="NCBI Taxonomy" id="546272"/>
    <lineage>
        <taxon>Bacteria</taxon>
        <taxon>Pseudomonadati</taxon>
        <taxon>Pseudomonadota</taxon>
        <taxon>Alphaproteobacteria</taxon>
        <taxon>Hyphomicrobiales</taxon>
        <taxon>Brucellaceae</taxon>
        <taxon>Brucella/Ochrobactrum group</taxon>
        <taxon>Brucella</taxon>
    </lineage>
</organism>
<reference key="1">
    <citation type="submission" date="2009-03" db="EMBL/GenBank/DDBJ databases">
        <title>Brucella melitensis ATCC 23457 whole genome shotgun sequencing project.</title>
        <authorList>
            <person name="Setubal J.C."/>
            <person name="Boyle S."/>
            <person name="Crasta O.R."/>
            <person name="Gillespie J.J."/>
            <person name="Kenyon R.W."/>
            <person name="Lu J."/>
            <person name="Mane S."/>
            <person name="Nagrani S."/>
            <person name="Shallom J.M."/>
            <person name="Shallom S."/>
            <person name="Shukla M."/>
            <person name="Snyder E.E."/>
            <person name="Sobral B.W."/>
            <person name="Wattam A.R."/>
            <person name="Will R."/>
            <person name="Williams K."/>
            <person name="Yoo H."/>
            <person name="Munk C."/>
            <person name="Tapia R."/>
            <person name="Han C."/>
            <person name="Detter J.C."/>
            <person name="Bruce D."/>
            <person name="Brettin T.S."/>
        </authorList>
    </citation>
    <scope>NUCLEOTIDE SEQUENCE [LARGE SCALE GENOMIC DNA]</scope>
    <source>
        <strain>ATCC 23457</strain>
    </source>
</reference>
<dbReference type="EMBL" id="CP001488">
    <property type="protein sequence ID" value="ACO01451.1"/>
    <property type="molecule type" value="Genomic_DNA"/>
</dbReference>
<dbReference type="RefSeq" id="WP_002964805.1">
    <property type="nucleotide sequence ID" value="NC_012441.1"/>
</dbReference>
<dbReference type="SMR" id="C0REX9"/>
<dbReference type="KEGG" id="bmi:BMEA_A1769"/>
<dbReference type="HOGENOM" id="CLU_062974_2_2_5"/>
<dbReference type="Proteomes" id="UP000001748">
    <property type="component" value="Chromosome I"/>
</dbReference>
<dbReference type="GO" id="GO:0005829">
    <property type="term" value="C:cytosol"/>
    <property type="evidence" value="ECO:0007669"/>
    <property type="project" value="TreeGrafter"/>
</dbReference>
<dbReference type="GO" id="GO:0003677">
    <property type="term" value="F:DNA binding"/>
    <property type="evidence" value="ECO:0007669"/>
    <property type="project" value="UniProtKB-UniRule"/>
</dbReference>
<dbReference type="GO" id="GO:0006355">
    <property type="term" value="P:regulation of DNA-templated transcription"/>
    <property type="evidence" value="ECO:0007669"/>
    <property type="project" value="UniProtKB-UniRule"/>
</dbReference>
<dbReference type="FunFam" id="1.10.10.200:FF:000002">
    <property type="entry name" value="Probable transcriptional regulatory protein CLM62_37755"/>
    <property type="match status" value="1"/>
</dbReference>
<dbReference type="Gene3D" id="1.10.10.200">
    <property type="match status" value="1"/>
</dbReference>
<dbReference type="Gene3D" id="3.30.70.980">
    <property type="match status" value="2"/>
</dbReference>
<dbReference type="HAMAP" id="MF_00693">
    <property type="entry name" value="Transcrip_reg_TACO1"/>
    <property type="match status" value="1"/>
</dbReference>
<dbReference type="InterPro" id="IPR017856">
    <property type="entry name" value="Integrase-like_N"/>
</dbReference>
<dbReference type="InterPro" id="IPR048300">
    <property type="entry name" value="TACO1_YebC-like_2nd/3rd_dom"/>
</dbReference>
<dbReference type="InterPro" id="IPR049083">
    <property type="entry name" value="TACO1_YebC_N"/>
</dbReference>
<dbReference type="InterPro" id="IPR002876">
    <property type="entry name" value="Transcrip_reg_TACO1-like"/>
</dbReference>
<dbReference type="InterPro" id="IPR026564">
    <property type="entry name" value="Transcrip_reg_TACO1-like_dom3"/>
</dbReference>
<dbReference type="InterPro" id="IPR029072">
    <property type="entry name" value="YebC-like"/>
</dbReference>
<dbReference type="NCBIfam" id="NF001030">
    <property type="entry name" value="PRK00110.1"/>
    <property type="match status" value="1"/>
</dbReference>
<dbReference type="NCBIfam" id="NF009044">
    <property type="entry name" value="PRK12378.1"/>
    <property type="match status" value="1"/>
</dbReference>
<dbReference type="NCBIfam" id="TIGR01033">
    <property type="entry name" value="YebC/PmpR family DNA-binding transcriptional regulator"/>
    <property type="match status" value="1"/>
</dbReference>
<dbReference type="PANTHER" id="PTHR12532:SF6">
    <property type="entry name" value="TRANSCRIPTIONAL REGULATORY PROTEIN YEBC-RELATED"/>
    <property type="match status" value="1"/>
</dbReference>
<dbReference type="PANTHER" id="PTHR12532">
    <property type="entry name" value="TRANSLATIONAL ACTIVATOR OF CYTOCHROME C OXIDASE 1"/>
    <property type="match status" value="1"/>
</dbReference>
<dbReference type="Pfam" id="PF20772">
    <property type="entry name" value="TACO1_YebC_N"/>
    <property type="match status" value="1"/>
</dbReference>
<dbReference type="Pfam" id="PF01709">
    <property type="entry name" value="Transcrip_reg"/>
    <property type="match status" value="1"/>
</dbReference>
<dbReference type="SUPFAM" id="SSF75625">
    <property type="entry name" value="YebC-like"/>
    <property type="match status" value="1"/>
</dbReference>
<protein>
    <recommendedName>
        <fullName evidence="1">Probable transcriptional regulatory protein BMEA_A1769</fullName>
    </recommendedName>
</protein>
<comment type="subcellular location">
    <subcellularLocation>
        <location evidence="1">Cytoplasm</location>
    </subcellularLocation>
</comment>
<comment type="similarity">
    <text evidence="1">Belongs to the TACO1 family.</text>
</comment>
<proteinExistence type="inferred from homology"/>
<name>Y1769_BRUMB</name>